<name>G3P_PYRWO</name>
<organism>
    <name type="scientific">Pyrococcus woesei</name>
    <dbReference type="NCBI Taxonomy" id="2262"/>
    <lineage>
        <taxon>Archaea</taxon>
        <taxon>Methanobacteriati</taxon>
        <taxon>Methanobacteriota</taxon>
        <taxon>Thermococci</taxon>
        <taxon>Thermococcales</taxon>
        <taxon>Thermococcaceae</taxon>
        <taxon>Pyrococcus</taxon>
    </lineage>
</organism>
<evidence type="ECO:0000250" key="1"/>
<evidence type="ECO:0000269" key="2">
    <source>
    </source>
</evidence>
<evidence type="ECO:0000303" key="3">
    <source>
    </source>
</evidence>
<evidence type="ECO:0000305" key="4"/>
<evidence type="ECO:0000305" key="5">
    <source>
    </source>
</evidence>
<protein>
    <recommendedName>
        <fullName evidence="3">Glyceraldehyde-3-phosphate dehydrogenase</fullName>
        <shortName>GAPDH</shortName>
        <ecNumber evidence="2">1.2.1.59</ecNumber>
    </recommendedName>
    <alternativeName>
        <fullName>NAD(P)-dependent glyceraldehyde-3-phosphate dehydrogenase</fullName>
    </alternativeName>
</protein>
<gene>
    <name type="primary">gap</name>
    <name type="synonym">gapDH</name>
</gene>
<keyword id="KW-0963">Cytoplasm</keyword>
<keyword id="KW-0903">Direct protein sequencing</keyword>
<keyword id="KW-1284">Encapsulin nanocompartment</keyword>
<keyword id="KW-0324">Glycolysis</keyword>
<keyword id="KW-0520">NAD</keyword>
<keyword id="KW-0521">NADP</keyword>
<keyword id="KW-0560">Oxidoreductase</keyword>
<dbReference type="EC" id="1.2.1.59" evidence="2"/>
<dbReference type="EMBL" id="M83988">
    <property type="protein sequence ID" value="AAA73180.1"/>
    <property type="molecule type" value="Genomic_DNA"/>
</dbReference>
<dbReference type="PIR" id="S10653">
    <property type="entry name" value="DEQYG"/>
</dbReference>
<dbReference type="SMR" id="P61880"/>
<dbReference type="UniPathway" id="UPA00109">
    <property type="reaction ID" value="UER00184"/>
</dbReference>
<dbReference type="GO" id="GO:0005737">
    <property type="term" value="C:cytoplasm"/>
    <property type="evidence" value="ECO:0007669"/>
    <property type="project" value="UniProtKB-SubCell"/>
</dbReference>
<dbReference type="GO" id="GO:0140737">
    <property type="term" value="C:encapsulin nanocompartment"/>
    <property type="evidence" value="ECO:0007669"/>
    <property type="project" value="UniProtKB-SubCell"/>
</dbReference>
<dbReference type="GO" id="GO:0008839">
    <property type="term" value="F:4-hydroxy-tetrahydrodipicolinate reductase"/>
    <property type="evidence" value="ECO:0007669"/>
    <property type="project" value="InterPro"/>
</dbReference>
<dbReference type="GO" id="GO:0004365">
    <property type="term" value="F:glyceraldehyde-3-phosphate dehydrogenase (NAD+) (phosphorylating) activity"/>
    <property type="evidence" value="ECO:0007669"/>
    <property type="project" value="UniProtKB-UniRule"/>
</dbReference>
<dbReference type="GO" id="GO:0047100">
    <property type="term" value="F:glyceraldehyde-3-phosphate dehydrogenase (NADP+) (phosphorylating) activity"/>
    <property type="evidence" value="ECO:0007669"/>
    <property type="project" value="RHEA"/>
</dbReference>
<dbReference type="GO" id="GO:0051287">
    <property type="term" value="F:NAD binding"/>
    <property type="evidence" value="ECO:0007669"/>
    <property type="project" value="InterPro"/>
</dbReference>
<dbReference type="GO" id="GO:0050661">
    <property type="term" value="F:NADP binding"/>
    <property type="evidence" value="ECO:0007669"/>
    <property type="project" value="InterPro"/>
</dbReference>
<dbReference type="GO" id="GO:0006096">
    <property type="term" value="P:glycolytic process"/>
    <property type="evidence" value="ECO:0007669"/>
    <property type="project" value="UniProtKB-UniRule"/>
</dbReference>
<dbReference type="GO" id="GO:0009089">
    <property type="term" value="P:lysine biosynthetic process via diaminopimelate"/>
    <property type="evidence" value="ECO:0007669"/>
    <property type="project" value="InterPro"/>
</dbReference>
<dbReference type="CDD" id="cd18127">
    <property type="entry name" value="GAPDH_II_C"/>
    <property type="match status" value="1"/>
</dbReference>
<dbReference type="CDD" id="cd02278">
    <property type="entry name" value="GAPDH_II_N"/>
    <property type="match status" value="1"/>
</dbReference>
<dbReference type="Gene3D" id="3.30.360.10">
    <property type="entry name" value="Dihydrodipicolinate Reductase, domain 2"/>
    <property type="match status" value="1"/>
</dbReference>
<dbReference type="Gene3D" id="3.40.50.720">
    <property type="entry name" value="NAD(P)-binding Rossmann-like Domain"/>
    <property type="match status" value="1"/>
</dbReference>
<dbReference type="HAMAP" id="MF_00559">
    <property type="entry name" value="G3P_dehdrog_arch"/>
    <property type="match status" value="1"/>
</dbReference>
<dbReference type="InterPro" id="IPR000846">
    <property type="entry name" value="DapB_N"/>
</dbReference>
<dbReference type="InterPro" id="IPR020831">
    <property type="entry name" value="GlycerAld/Erythrose_P_DH"/>
</dbReference>
<dbReference type="InterPro" id="IPR020830">
    <property type="entry name" value="GlycerAld_3-P_DH_AS"/>
</dbReference>
<dbReference type="InterPro" id="IPR020829">
    <property type="entry name" value="GlycerAld_3-P_DH_cat"/>
</dbReference>
<dbReference type="InterPro" id="IPR020828">
    <property type="entry name" value="GlycerAld_3-P_DH_NAD(P)-bd"/>
</dbReference>
<dbReference type="InterPro" id="IPR006436">
    <property type="entry name" value="Glyceraldehyde-3-P_DH_2_arc"/>
</dbReference>
<dbReference type="InterPro" id="IPR036291">
    <property type="entry name" value="NAD(P)-bd_dom_sf"/>
</dbReference>
<dbReference type="NCBIfam" id="TIGR01546">
    <property type="entry name" value="GAPDH-II_archae"/>
    <property type="match status" value="1"/>
</dbReference>
<dbReference type="NCBIfam" id="NF003251">
    <property type="entry name" value="PRK04207.1"/>
    <property type="match status" value="1"/>
</dbReference>
<dbReference type="Pfam" id="PF01113">
    <property type="entry name" value="DapB_N"/>
    <property type="match status" value="1"/>
</dbReference>
<dbReference type="Pfam" id="PF02800">
    <property type="entry name" value="Gp_dh_C"/>
    <property type="match status" value="1"/>
</dbReference>
<dbReference type="PIRSF" id="PIRSF000149">
    <property type="entry name" value="GAP_DH"/>
    <property type="match status" value="1"/>
</dbReference>
<dbReference type="SMART" id="SM00846">
    <property type="entry name" value="Gp_dh_N"/>
    <property type="match status" value="1"/>
</dbReference>
<dbReference type="SUPFAM" id="SSF55347">
    <property type="entry name" value="Glyceraldehyde-3-phosphate dehydrogenase-like, C-terminal domain"/>
    <property type="match status" value="1"/>
</dbReference>
<dbReference type="SUPFAM" id="SSF51735">
    <property type="entry name" value="NAD(P)-binding Rossmann-fold domains"/>
    <property type="match status" value="1"/>
</dbReference>
<dbReference type="PROSITE" id="PS00071">
    <property type="entry name" value="GAPDH"/>
    <property type="match status" value="1"/>
</dbReference>
<reference key="1">
    <citation type="journal article" date="1990" name="J. Bacteriol.">
        <title>Glyceraldehyde-3-phosphate dehydrogenase from the hyperthermophilic archaebacterium Pyrococcus woesei: characterization of the enzyme, cloning and sequencing of the gene, and expression in Escherichia coli.</title>
        <authorList>
            <person name="Zwickl P."/>
            <person name="Fabry S."/>
            <person name="Bogedain C."/>
            <person name="Haas A."/>
            <person name="Hensel R."/>
        </authorList>
    </citation>
    <scope>NUCLEOTIDE SEQUENCE [GENOMIC DNA]</scope>
    <scope>PROTEIN SEQUENCE OF 1-14</scope>
    <scope>FUNCTION</scope>
    <scope>CATALYTIC ACTIVITY</scope>
    <scope>ACTIVITY REGULATION</scope>
    <scope>BIOPHYSICOCHEMICAL PROPERTIES</scope>
    <source>
        <strain>ATCC 49860 / DSM 3773 / JCM 8421 / Vul4</strain>
    </source>
</reference>
<reference key="2">
    <citation type="journal article" date="2021" name="Nat. Commun.">
        <title>Large-scale computational discovery and analysis of virus-derived microbial nanocompartments.</title>
        <authorList>
            <person name="Andreas M.P."/>
            <person name="Giessen T.W."/>
        </authorList>
    </citation>
    <scope>PUTATIVE SUBCELLULAR LOCATION</scope>
    <scope>CLASSIFICATION</scope>
</reference>
<comment type="function">
    <text evidence="2 5">Possible cargo protein of a type 4B encapsulin nanocompartment (Probable). Active in the presence of NAD and NADP, prefers NADP (PubMed:2165475).</text>
</comment>
<comment type="catalytic activity">
    <reaction evidence="2">
        <text>D-glyceraldehyde 3-phosphate + phosphate + NADP(+) = (2R)-3-phospho-glyceroyl phosphate + NADPH + H(+)</text>
        <dbReference type="Rhea" id="RHEA:10296"/>
        <dbReference type="ChEBI" id="CHEBI:15378"/>
        <dbReference type="ChEBI" id="CHEBI:43474"/>
        <dbReference type="ChEBI" id="CHEBI:57604"/>
        <dbReference type="ChEBI" id="CHEBI:57783"/>
        <dbReference type="ChEBI" id="CHEBI:58349"/>
        <dbReference type="ChEBI" id="CHEBI:59776"/>
        <dbReference type="EC" id="1.2.1.59"/>
    </reaction>
</comment>
<comment type="catalytic activity">
    <reaction evidence="2">
        <text>D-glyceraldehyde 3-phosphate + phosphate + NAD(+) = (2R)-3-phospho-glyceroyl phosphate + NADH + H(+)</text>
        <dbReference type="Rhea" id="RHEA:10300"/>
        <dbReference type="ChEBI" id="CHEBI:15378"/>
        <dbReference type="ChEBI" id="CHEBI:43474"/>
        <dbReference type="ChEBI" id="CHEBI:57540"/>
        <dbReference type="ChEBI" id="CHEBI:57604"/>
        <dbReference type="ChEBI" id="CHEBI:57945"/>
        <dbReference type="ChEBI" id="CHEBI:59776"/>
        <dbReference type="EC" id="1.2.1.59"/>
    </reaction>
</comment>
<comment type="activity regulation">
    <text evidence="2">Insensitive to pentalenolactone, an inhibitor of bacterial and eukaryotic GAPDH. Activity in vitro is significantly stabilized by potassium citrate.</text>
</comment>
<comment type="biophysicochemical properties">
    <kinetics>
        <KM evidence="2">40 mM for phosphate</KM>
        <KM evidence="2">1 mM for NAD(+)</KM>
        <KM evidence="2">0.01 mM for NADP(+)</KM>
    </kinetics>
    <temperatureDependence>
        <text evidence="2">Thermostable. Has a 44-minute half-life at 100 degrees Celsius.</text>
    </temperatureDependence>
</comment>
<comment type="pathway">
    <text>Carbohydrate degradation; glycolysis; pyruvate from D-glyceraldehyde 3-phosphate: step 1/5.</text>
</comment>
<comment type="subunit">
    <text>Homotetramer.</text>
</comment>
<comment type="subcellular location">
    <subcellularLocation>
        <location>Cytoplasm</location>
    </subcellularLocation>
    <subcellularLocation>
        <location evidence="5">Encapsulin nanocompartment</location>
    </subcellularLocation>
    <text evidence="5">Its location in a locus with a type 4B encapsulin shell protein suggests it might be located in an encapsulin nanocompartment.</text>
</comment>
<comment type="similarity">
    <text evidence="4">Belongs to the glyceraldehyde-3-phosphate dehydrogenase family.</text>
</comment>
<feature type="chain" id="PRO_0000145733" description="Glyceraldehyde-3-phosphate dehydrogenase">
    <location>
        <begin position="1"/>
        <end position="334"/>
    </location>
</feature>
<feature type="active site" description="Nucleophile" evidence="1">
    <location>
        <position position="141"/>
    </location>
</feature>
<feature type="binding site" evidence="1">
    <location>
        <begin position="12"/>
        <end position="13"/>
    </location>
    <ligand>
        <name>NAD(+)</name>
        <dbReference type="ChEBI" id="CHEBI:57540"/>
    </ligand>
</feature>
<feature type="binding site" evidence="1">
    <location>
        <position position="111"/>
    </location>
    <ligand>
        <name>NAD(+)</name>
        <dbReference type="ChEBI" id="CHEBI:57540"/>
    </ligand>
</feature>
<feature type="binding site" evidence="1">
    <location>
        <begin position="140"/>
        <end position="142"/>
    </location>
    <ligand>
        <name>D-glyceraldehyde 3-phosphate</name>
        <dbReference type="ChEBI" id="CHEBI:59776"/>
    </ligand>
</feature>
<feature type="binding site" evidence="1">
    <location>
        <position position="167"/>
    </location>
    <ligand>
        <name>NAD(+)</name>
        <dbReference type="ChEBI" id="CHEBI:57540"/>
    </ligand>
</feature>
<feature type="binding site" evidence="1">
    <location>
        <begin position="192"/>
        <end position="193"/>
    </location>
    <ligand>
        <name>D-glyceraldehyde 3-phosphate</name>
        <dbReference type="ChEBI" id="CHEBI:59776"/>
    </ligand>
</feature>
<feature type="binding site" evidence="1">
    <location>
        <position position="298"/>
    </location>
    <ligand>
        <name>NAD(+)</name>
        <dbReference type="ChEBI" id="CHEBI:57540"/>
    </ligand>
</feature>
<sequence length="334" mass="37436">MKIKVGINGYGTIGKRVAYAVTKQDDMELIGVTKTKPDFEAYRAKELGIPVYAASEEFLPRFEKAGFEVEGTLNDLLEKVDIIVDATPGGMGEKNKQLYEKAGVKAIFQGGEKAEVAQVSFVAQANYEAALGKDYVRVVSCNTTGLVRTLNAIKDYVDYVYAVMIRRAADPNDIKRGPINAIKPSVTIPSHHGPDVQTVIPINIETSAFVVPTTIMHVHSIMVELKKPLTREDVIDIFENTTRVLLFEKEKGFESTAQLIEFARDLHREWNNLYEIAVWKESINVKGNRLFYIQAVHQESDVIPENIDAIRAMFEIAEKWESIKKTNKSLGILK</sequence>
<accession>P61880</accession>
<accession>P20286</accession>
<proteinExistence type="evidence at protein level"/>